<name>RCC1_HUMAN</name>
<dbReference type="EMBL" id="X12654">
    <property type="protein sequence ID" value="CAA31182.1"/>
    <property type="molecule type" value="mRNA"/>
</dbReference>
<dbReference type="EMBL" id="X06130">
    <property type="protein sequence ID" value="CAA29496.1"/>
    <property type="molecule type" value="mRNA"/>
</dbReference>
<dbReference type="EMBL" id="D00591">
    <property type="protein sequence ID" value="BAA00469.1"/>
    <property type="molecule type" value="Genomic_DNA"/>
</dbReference>
<dbReference type="EMBL" id="AF498924">
    <property type="protein sequence ID" value="AAM21072.1"/>
    <property type="molecule type" value="mRNA"/>
</dbReference>
<dbReference type="EMBL" id="BC007300">
    <property type="protein sequence ID" value="AAH07300.1"/>
    <property type="molecule type" value="mRNA"/>
</dbReference>
<dbReference type="EMBL" id="BC010067">
    <property type="protein sequence ID" value="AAH10067.1"/>
    <property type="molecule type" value="mRNA"/>
</dbReference>
<dbReference type="EMBL" id="BC036903">
    <property type="protein sequence ID" value="AAH36903.1"/>
    <property type="molecule type" value="mRNA"/>
</dbReference>
<dbReference type="EMBL" id="BC069198">
    <property type="protein sequence ID" value="AAH69198.1"/>
    <property type="molecule type" value="mRNA"/>
</dbReference>
<dbReference type="EMBL" id="S75708">
    <property type="protein sequence ID" value="AAB32653.1"/>
    <property type="molecule type" value="mRNA"/>
</dbReference>
<dbReference type="CCDS" id="CCDS41295.1">
    <molecule id="P18754-2"/>
</dbReference>
<dbReference type="PIR" id="A26691">
    <property type="entry name" value="A26691"/>
</dbReference>
<dbReference type="RefSeq" id="NP_001041659.1">
    <molecule id="P18754-2"/>
    <property type="nucleotide sequence ID" value="NM_001048194.4"/>
</dbReference>
<dbReference type="RefSeq" id="NP_001041660.1">
    <property type="nucleotide sequence ID" value="NM_001048195.2"/>
</dbReference>
<dbReference type="RefSeq" id="NP_001041664.1">
    <molecule id="P18754-1"/>
    <property type="nucleotide sequence ID" value="NM_001048199.3"/>
</dbReference>
<dbReference type="RefSeq" id="NP_001260.1">
    <molecule id="P18754-1"/>
    <property type="nucleotide sequence ID" value="NM_001269.6"/>
</dbReference>
<dbReference type="RefSeq" id="NP_001368794.1">
    <molecule id="P18754-1"/>
    <property type="nucleotide sequence ID" value="NM_001381865.2"/>
</dbReference>
<dbReference type="RefSeq" id="NP_001368795.1">
    <molecule id="P18754-1"/>
    <property type="nucleotide sequence ID" value="NM_001381866.2"/>
</dbReference>
<dbReference type="PDB" id="1A12">
    <property type="method" value="X-ray"/>
    <property type="resolution" value="1.70 A"/>
    <property type="chains" value="A/B/C=9-421"/>
</dbReference>
<dbReference type="PDB" id="1I2M">
    <property type="method" value="X-ray"/>
    <property type="resolution" value="1.76 A"/>
    <property type="chains" value="B/D=20-421"/>
</dbReference>
<dbReference type="PDB" id="5E1B">
    <property type="method" value="X-ray"/>
    <property type="resolution" value="1.65 A"/>
    <property type="chains" value="D/E=2-7"/>
</dbReference>
<dbReference type="PDB" id="5E1D">
    <property type="method" value="X-ray"/>
    <property type="resolution" value="1.45 A"/>
    <property type="chains" value="D/E=3-7"/>
</dbReference>
<dbReference type="PDB" id="5E1M">
    <property type="method" value="X-ray"/>
    <property type="resolution" value="1.75 A"/>
    <property type="chains" value="D/E=3-7"/>
</dbReference>
<dbReference type="PDB" id="5E1O">
    <property type="method" value="X-ray"/>
    <property type="resolution" value="2.00 A"/>
    <property type="chains" value="D/E=3-7"/>
</dbReference>
<dbReference type="PDB" id="5E2A">
    <property type="method" value="X-ray"/>
    <property type="resolution" value="1.75 A"/>
    <property type="chains" value="D/E=3-7"/>
</dbReference>
<dbReference type="PDB" id="5E2B">
    <property type="method" value="X-ray"/>
    <property type="resolution" value="1.95 A"/>
    <property type="chains" value="D/E=3-7"/>
</dbReference>
<dbReference type="PDB" id="5TBK">
    <property type="method" value="X-ray"/>
    <property type="resolution" value="3.45 A"/>
    <property type="chains" value="I/J/K/L/M/N/O/P=1-421"/>
</dbReference>
<dbReference type="PDB" id="6DUB">
    <property type="method" value="X-ray"/>
    <property type="resolution" value="1.20 A"/>
    <property type="chains" value="E/F=3-7"/>
</dbReference>
<dbReference type="PDB" id="8UX1">
    <property type="method" value="EM"/>
    <property type="resolution" value="2.50 A"/>
    <property type="chains" value="L=2-421"/>
</dbReference>
<dbReference type="PDBsum" id="1A12"/>
<dbReference type="PDBsum" id="1I2M"/>
<dbReference type="PDBsum" id="5E1B"/>
<dbReference type="PDBsum" id="5E1D"/>
<dbReference type="PDBsum" id="5E1M"/>
<dbReference type="PDBsum" id="5E1O"/>
<dbReference type="PDBsum" id="5E2A"/>
<dbReference type="PDBsum" id="5E2B"/>
<dbReference type="PDBsum" id="5TBK"/>
<dbReference type="PDBsum" id="6DUB"/>
<dbReference type="PDBsum" id="8UX1"/>
<dbReference type="EMDB" id="EMD-42685"/>
<dbReference type="SMR" id="P18754"/>
<dbReference type="BioGRID" id="107529">
    <property type="interactions" value="214"/>
</dbReference>
<dbReference type="CORUM" id="P18754"/>
<dbReference type="DIP" id="DIP-35416N"/>
<dbReference type="FunCoup" id="P18754">
    <property type="interactions" value="3193"/>
</dbReference>
<dbReference type="IntAct" id="P18754">
    <property type="interactions" value="110"/>
</dbReference>
<dbReference type="MINT" id="P18754"/>
<dbReference type="STRING" id="9606.ENSP00000497402"/>
<dbReference type="GlyCosmos" id="P18754">
    <property type="glycosylation" value="1 site, 1 glycan"/>
</dbReference>
<dbReference type="GlyGen" id="P18754">
    <property type="glycosylation" value="2 sites, 1 O-linked glycan (2 sites)"/>
</dbReference>
<dbReference type="iPTMnet" id="P18754"/>
<dbReference type="MetOSite" id="P18754"/>
<dbReference type="PhosphoSitePlus" id="P18754"/>
<dbReference type="SwissPalm" id="P18754"/>
<dbReference type="BioMuta" id="RCC1"/>
<dbReference type="DMDM" id="132170"/>
<dbReference type="jPOST" id="P18754"/>
<dbReference type="MassIVE" id="P18754"/>
<dbReference type="PaxDb" id="9606-ENSP00000362937"/>
<dbReference type="PeptideAtlas" id="P18754"/>
<dbReference type="ProteomicsDB" id="53606">
    <molecule id="P18754-1"/>
</dbReference>
<dbReference type="ProteomicsDB" id="53607">
    <molecule id="P18754-2"/>
</dbReference>
<dbReference type="Pumba" id="P18754"/>
<dbReference type="TopDownProteomics" id="P18754-1">
    <molecule id="P18754-1"/>
</dbReference>
<dbReference type="Antibodypedia" id="4212">
    <property type="antibodies" value="440 antibodies from 41 providers"/>
</dbReference>
<dbReference type="DNASU" id="1104"/>
<dbReference type="Ensembl" id="ENST00000373831.7">
    <molecule id="P18754-2"/>
    <property type="protein sequence ID" value="ENSP00000362937.3"/>
    <property type="gene ID" value="ENSG00000180198.17"/>
</dbReference>
<dbReference type="Ensembl" id="ENST00000373832.5">
    <molecule id="P18754-1"/>
    <property type="protein sequence ID" value="ENSP00000362938.1"/>
    <property type="gene ID" value="ENSG00000180198.17"/>
</dbReference>
<dbReference type="Ensembl" id="ENST00000373833.10">
    <molecule id="P18754-1"/>
    <property type="protein sequence ID" value="ENSP00000362939.5"/>
    <property type="gene ID" value="ENSG00000180198.17"/>
</dbReference>
<dbReference type="Ensembl" id="ENST00000398958.6">
    <molecule id="P18754-1"/>
    <property type="protein sequence ID" value="ENSP00000381931.2"/>
    <property type="gene ID" value="ENSG00000180198.17"/>
</dbReference>
<dbReference type="Ensembl" id="ENST00000649185.1">
    <molecule id="P18754-2"/>
    <property type="protein sequence ID" value="ENSP00000497402.1"/>
    <property type="gene ID" value="ENSG00000180198.17"/>
</dbReference>
<dbReference type="Ensembl" id="ENST00000683442.1">
    <molecule id="P18754-1"/>
    <property type="protein sequence ID" value="ENSP00000508074.1"/>
    <property type="gene ID" value="ENSG00000180198.17"/>
</dbReference>
<dbReference type="GeneID" id="1104"/>
<dbReference type="KEGG" id="hsa:1104"/>
<dbReference type="MANE-Select" id="ENST00000683442.1">
    <property type="protein sequence ID" value="ENSP00000508074.1"/>
    <property type="RefSeq nucleotide sequence ID" value="NM_001381865.2"/>
    <property type="RefSeq protein sequence ID" value="NP_001368794.1"/>
</dbReference>
<dbReference type="UCSC" id="uc001bqf.3">
    <molecule id="P18754-1"/>
    <property type="organism name" value="human"/>
</dbReference>
<dbReference type="AGR" id="HGNC:1913"/>
<dbReference type="CTD" id="1104"/>
<dbReference type="DisGeNET" id="1104"/>
<dbReference type="GeneCards" id="RCC1"/>
<dbReference type="HGNC" id="HGNC:1913">
    <property type="gene designation" value="RCC1"/>
</dbReference>
<dbReference type="HPA" id="ENSG00000180198">
    <property type="expression patterns" value="Low tissue specificity"/>
</dbReference>
<dbReference type="MIM" id="179710">
    <property type="type" value="gene"/>
</dbReference>
<dbReference type="neXtProt" id="NX_P18754"/>
<dbReference type="OpenTargets" id="ENSG00000180198"/>
<dbReference type="PharmGKB" id="PA26449"/>
<dbReference type="VEuPathDB" id="HostDB:ENSG00000180198"/>
<dbReference type="eggNOG" id="KOG1426">
    <property type="taxonomic scope" value="Eukaryota"/>
</dbReference>
<dbReference type="GeneTree" id="ENSGT00940000155543"/>
<dbReference type="HOGENOM" id="CLU_005210_6_2_1"/>
<dbReference type="InParanoid" id="P18754"/>
<dbReference type="OMA" id="IFVWGTG"/>
<dbReference type="OrthoDB" id="61110at2759"/>
<dbReference type="PAN-GO" id="P18754">
    <property type="GO annotations" value="2 GO annotations based on evolutionary models"/>
</dbReference>
<dbReference type="PhylomeDB" id="P18754"/>
<dbReference type="TreeFam" id="TF101139"/>
<dbReference type="PathwayCommons" id="P18754"/>
<dbReference type="Reactome" id="R-HSA-165054">
    <property type="pathway name" value="Rev-mediated nuclear export of HIV RNA"/>
</dbReference>
<dbReference type="Reactome" id="R-HSA-180746">
    <property type="pathway name" value="Nuclear import of Rev protein"/>
</dbReference>
<dbReference type="Reactome" id="R-HSA-9615933">
    <property type="pathway name" value="Postmitotic nuclear pore complex (NPC) reformation"/>
</dbReference>
<dbReference type="SignaLink" id="P18754"/>
<dbReference type="SIGNOR" id="P18754"/>
<dbReference type="BioGRID-ORCS" id="1104">
    <property type="hits" value="811 hits in 1178 CRISPR screens"/>
</dbReference>
<dbReference type="CD-CODE" id="91857CE7">
    <property type="entry name" value="Nucleolus"/>
</dbReference>
<dbReference type="CD-CODE" id="DEE660B4">
    <property type="entry name" value="Stress granule"/>
</dbReference>
<dbReference type="ChiTaRS" id="RCC1">
    <property type="organism name" value="human"/>
</dbReference>
<dbReference type="EvolutionaryTrace" id="P18754"/>
<dbReference type="GeneWiki" id="RCC1"/>
<dbReference type="GenomeRNAi" id="1104"/>
<dbReference type="Pharos" id="P18754">
    <property type="development level" value="Tbio"/>
</dbReference>
<dbReference type="PRO" id="PR:P18754"/>
<dbReference type="Proteomes" id="UP000005640">
    <property type="component" value="Chromosome 1"/>
</dbReference>
<dbReference type="RNAct" id="P18754">
    <property type="molecule type" value="protein"/>
</dbReference>
<dbReference type="Bgee" id="ENSG00000180198">
    <property type="expression patterns" value="Expressed in right testis and 167 other cell types or tissues"/>
</dbReference>
<dbReference type="ExpressionAtlas" id="P18754">
    <property type="expression patterns" value="baseline and differential"/>
</dbReference>
<dbReference type="GO" id="GO:0000785">
    <property type="term" value="C:chromatin"/>
    <property type="evidence" value="ECO:0000314"/>
    <property type="project" value="UniProtKB"/>
</dbReference>
<dbReference type="GO" id="GO:0005694">
    <property type="term" value="C:chromosome"/>
    <property type="evidence" value="ECO:0000304"/>
    <property type="project" value="Reactome"/>
</dbReference>
<dbReference type="GO" id="GO:0000794">
    <property type="term" value="C:condensed nuclear chromosome"/>
    <property type="evidence" value="ECO:0000314"/>
    <property type="project" value="UniProtKB"/>
</dbReference>
<dbReference type="GO" id="GO:0005737">
    <property type="term" value="C:cytoplasm"/>
    <property type="evidence" value="ECO:0000314"/>
    <property type="project" value="UniProtKB"/>
</dbReference>
<dbReference type="GO" id="GO:0005654">
    <property type="term" value="C:nucleoplasm"/>
    <property type="evidence" value="ECO:0000314"/>
    <property type="project" value="HPA"/>
</dbReference>
<dbReference type="GO" id="GO:0005634">
    <property type="term" value="C:nucleus"/>
    <property type="evidence" value="ECO:0000314"/>
    <property type="project" value="UniProtKB"/>
</dbReference>
<dbReference type="GO" id="GO:0032991">
    <property type="term" value="C:protein-containing complex"/>
    <property type="evidence" value="ECO:0000314"/>
    <property type="project" value="CAFA"/>
</dbReference>
<dbReference type="GO" id="GO:0003682">
    <property type="term" value="F:chromatin binding"/>
    <property type="evidence" value="ECO:0000314"/>
    <property type="project" value="UniProtKB"/>
</dbReference>
<dbReference type="GO" id="GO:0005085">
    <property type="term" value="F:guanyl-nucleotide exchange factor activity"/>
    <property type="evidence" value="ECO:0000314"/>
    <property type="project" value="UniProtKB"/>
</dbReference>
<dbReference type="GO" id="GO:0042393">
    <property type="term" value="F:histone binding"/>
    <property type="evidence" value="ECO:0000314"/>
    <property type="project" value="UniProtKB"/>
</dbReference>
<dbReference type="GO" id="GO:0031492">
    <property type="term" value="F:nucleosomal DNA binding"/>
    <property type="evidence" value="ECO:0000314"/>
    <property type="project" value="UniProtKB"/>
</dbReference>
<dbReference type="GO" id="GO:0031491">
    <property type="term" value="F:nucleosome binding"/>
    <property type="evidence" value="ECO:0000315"/>
    <property type="project" value="CAFA"/>
</dbReference>
<dbReference type="GO" id="GO:0046982">
    <property type="term" value="F:protein heterodimerization activity"/>
    <property type="evidence" value="ECO:0000353"/>
    <property type="project" value="CAFA"/>
</dbReference>
<dbReference type="GO" id="GO:0031267">
    <property type="term" value="F:small GTPase binding"/>
    <property type="evidence" value="ECO:0000314"/>
    <property type="project" value="CAFA"/>
</dbReference>
<dbReference type="GO" id="GO:0043199">
    <property type="term" value="F:sulfate binding"/>
    <property type="evidence" value="ECO:0000314"/>
    <property type="project" value="CAFA"/>
</dbReference>
<dbReference type="GO" id="GO:0051301">
    <property type="term" value="P:cell division"/>
    <property type="evidence" value="ECO:0007669"/>
    <property type="project" value="UniProtKB-KW"/>
</dbReference>
<dbReference type="GO" id="GO:0007059">
    <property type="term" value="P:chromosome segregation"/>
    <property type="evidence" value="ECO:0000315"/>
    <property type="project" value="UniProtKB"/>
</dbReference>
<dbReference type="GO" id="GO:0000082">
    <property type="term" value="P:G1/S transition of mitotic cell cycle"/>
    <property type="evidence" value="ECO:0000315"/>
    <property type="project" value="UniProtKB"/>
</dbReference>
<dbReference type="GO" id="GO:0007084">
    <property type="term" value="P:mitotic nuclear membrane reassembly"/>
    <property type="evidence" value="ECO:0000304"/>
    <property type="project" value="Reactome"/>
</dbReference>
<dbReference type="GO" id="GO:0007052">
    <property type="term" value="P:mitotic spindle organization"/>
    <property type="evidence" value="ECO:0000314"/>
    <property type="project" value="UniProtKB"/>
</dbReference>
<dbReference type="GO" id="GO:0007346">
    <property type="term" value="P:regulation of mitotic cell cycle"/>
    <property type="evidence" value="ECO:0000318"/>
    <property type="project" value="GO_Central"/>
</dbReference>
<dbReference type="GO" id="GO:0007088">
    <property type="term" value="P:regulation of mitotic nuclear division"/>
    <property type="evidence" value="ECO:0000314"/>
    <property type="project" value="UniProtKB"/>
</dbReference>
<dbReference type="GO" id="GO:1901673">
    <property type="term" value="P:regulation of mitotic spindle assembly"/>
    <property type="evidence" value="ECO:0000318"/>
    <property type="project" value="GO_Central"/>
</dbReference>
<dbReference type="GO" id="GO:0051225">
    <property type="term" value="P:spindle assembly"/>
    <property type="evidence" value="ECO:0000315"/>
    <property type="project" value="UniProtKB"/>
</dbReference>
<dbReference type="GO" id="GO:0016032">
    <property type="term" value="P:viral process"/>
    <property type="evidence" value="ECO:0000304"/>
    <property type="project" value="Reactome"/>
</dbReference>
<dbReference type="FunFam" id="2.130.10.30:FF:000008">
    <property type="entry name" value="regulator of chromosome condensation isoform X1"/>
    <property type="match status" value="1"/>
</dbReference>
<dbReference type="Gene3D" id="2.130.10.30">
    <property type="entry name" value="Regulator of chromosome condensation 1/beta-lactamase-inhibitor protein II"/>
    <property type="match status" value="1"/>
</dbReference>
<dbReference type="InterPro" id="IPR051553">
    <property type="entry name" value="Ran_GTPase-activating"/>
</dbReference>
<dbReference type="InterPro" id="IPR009091">
    <property type="entry name" value="RCC1/BLIP-II"/>
</dbReference>
<dbReference type="InterPro" id="IPR000408">
    <property type="entry name" value="Reg_chr_condens"/>
</dbReference>
<dbReference type="PANTHER" id="PTHR45982">
    <property type="entry name" value="REGULATOR OF CHROMOSOME CONDENSATION"/>
    <property type="match status" value="1"/>
</dbReference>
<dbReference type="PANTHER" id="PTHR45982:SF9">
    <property type="entry name" value="REGULATOR OF CHROMOSOME CONDENSATION"/>
    <property type="match status" value="1"/>
</dbReference>
<dbReference type="Pfam" id="PF25390">
    <property type="entry name" value="WD40_RLD"/>
    <property type="match status" value="1"/>
</dbReference>
<dbReference type="PRINTS" id="PR00633">
    <property type="entry name" value="RCCNDNSATION"/>
</dbReference>
<dbReference type="SUPFAM" id="SSF50985">
    <property type="entry name" value="RCC1/BLIP-II"/>
    <property type="match status" value="1"/>
</dbReference>
<dbReference type="PROSITE" id="PS00625">
    <property type="entry name" value="RCC1_1"/>
    <property type="match status" value="1"/>
</dbReference>
<dbReference type="PROSITE" id="PS00626">
    <property type="entry name" value="RCC1_2"/>
    <property type="match status" value="4"/>
</dbReference>
<dbReference type="PROSITE" id="PS50012">
    <property type="entry name" value="RCC1_3"/>
    <property type="match status" value="7"/>
</dbReference>
<reference key="1">
    <citation type="journal article" date="1987" name="Genes Dev.">
        <title>Isolation and characterization of the active cDNA of the human cell cycle gene (RCC1) involved in the regulation of onset of chromosome condensation.</title>
        <authorList>
            <person name="Ohtsubo M."/>
            <person name="Kai R."/>
            <person name="Furuno N."/>
            <person name="Sekiguchi T."/>
            <person name="Sekiguchi M."/>
            <person name="Hayashida H."/>
            <person name="Kuma K."/>
            <person name="Miyata T."/>
            <person name="Fukushige S."/>
            <person name="Murotsu T."/>
            <person name="Matsubara K."/>
            <person name="Nishimoto T."/>
        </authorList>
    </citation>
    <scope>NUCLEOTIDE SEQUENCE [MRNA] (ISOFORM 1)</scope>
    <scope>FUNCTION</scope>
</reference>
<reference key="2">
    <citation type="journal article" date="1991" name="Genomics">
        <title>Complete nucleotide sequence of the human RCC1 gene involved in coupling between DNA replication and mitosis.</title>
        <authorList>
            <person name="Furuno N."/>
            <person name="Nakagawa K."/>
            <person name="Eguchi U."/>
            <person name="Ohtsubo M."/>
            <person name="Nishimoto T."/>
            <person name="Soeda E."/>
        </authorList>
    </citation>
    <scope>NUCLEOTIDE SEQUENCE [GENOMIC DNA]</scope>
</reference>
<reference key="3">
    <citation type="submission" date="2002-04" db="EMBL/GenBank/DDBJ databases">
        <title>cDNA clones of human proteins involved in signal transduction sequenced by the Guthrie cDNA resource center (www.cdna.org).</title>
        <authorList>
            <person name="Puhl H.L. III"/>
            <person name="Ikeda S.R."/>
            <person name="Aronstam R.S."/>
        </authorList>
    </citation>
    <scope>NUCLEOTIDE SEQUENCE [LARGE SCALE MRNA] (ISOFORM 1)</scope>
    <source>
        <tissue>Brain</tissue>
    </source>
</reference>
<reference key="4">
    <citation type="journal article" date="2004" name="Genome Res.">
        <title>The status, quality, and expansion of the NIH full-length cDNA project: the Mammalian Gene Collection (MGC).</title>
        <authorList>
            <consortium name="The MGC Project Team"/>
        </authorList>
    </citation>
    <scope>NUCLEOTIDE SEQUENCE [LARGE SCALE MRNA] (ISOFORMS 1 AND 2)</scope>
    <source>
        <tissue>Eye</tissue>
        <tissue>Mammary gland</tissue>
        <tissue>Muscle</tissue>
        <tissue>Testis</tissue>
    </source>
</reference>
<reference key="5">
    <citation type="journal article" date="1994" name="J. Cell Sci.">
        <title>Mammalian cells have two functional RCC1 proteins produced by alternative splicing.</title>
        <authorList>
            <person name="Miyabashira J."/>
            <person name="Sekiguchi T."/>
            <person name="Nishimoto T."/>
        </authorList>
    </citation>
    <scope>NUCLEOTIDE SEQUENCE [MRNA] OF 19-33 (ISOFORM 2)</scope>
    <scope>ALTERNATIVE SPLICING</scope>
</reference>
<reference key="6">
    <citation type="journal article" date="1990" name="Proc. Natl. Acad. Sci. U.S.A.">
        <title>A 47-kDa human nuclear protein recognized by antikinetochore autoimmune sera is homologous with the protein encoded by RCC1, a gene implicated in onset of chromosome condensation.</title>
        <authorList>
            <person name="Bischoff F.R."/>
            <person name="Maier G."/>
            <person name="Tilz G."/>
            <person name="Ponstingl H."/>
        </authorList>
    </citation>
    <scope>PARTIAL PROTEIN SEQUENCE</scope>
    <scope>SUBCELLULAR LOCATION</scope>
</reference>
<reference key="7">
    <citation type="journal article" date="1991" name="Nature">
        <title>Catalysis of guanine nucleotide exchange on Ran by the mitotic regulator RCC1.</title>
        <authorList>
            <person name="Bischoff F.R."/>
            <person name="Ponstingl H."/>
        </authorList>
    </citation>
    <scope>FUNCTION</scope>
</reference>
<reference key="8">
    <citation type="journal article" date="2002" name="Curr. Biol.">
        <title>Targeting of RCC1 to chromosomes is required for proper mitotic spindle assembly in human cells.</title>
        <authorList>
            <person name="Moore W."/>
            <person name="Zhang C."/>
            <person name="Clarke P.R."/>
        </authorList>
    </citation>
    <scope>FUNCTION</scope>
    <scope>SUBCELLULAR LOCATION</scope>
    <scope>MUTAGENESIS OF ASP-182</scope>
</reference>
<reference key="9">
    <citation type="journal article" date="2006" name="Cell">
        <title>Global, in vivo, and site-specific phosphorylation dynamics in signaling networks.</title>
        <authorList>
            <person name="Olsen J.V."/>
            <person name="Blagoev B."/>
            <person name="Gnad F."/>
            <person name="Macek B."/>
            <person name="Kumar C."/>
            <person name="Mortensen P."/>
            <person name="Mann M."/>
        </authorList>
    </citation>
    <scope>PHOSPHORYLATION [LARGE SCALE ANALYSIS] AT SER-11</scope>
    <scope>IDENTIFICATION BY MASS SPECTROMETRY [LARGE SCALE ANALYSIS]</scope>
    <source>
        <tissue>Cervix carcinoma</tissue>
    </source>
</reference>
<reference key="10">
    <citation type="journal article" date="2006" name="J. Cell Sci.">
        <title>Novel function of beta-arrestin2 in the nucleus of mature spermatozoa.</title>
        <authorList>
            <person name="Neuhaus E.M."/>
            <person name="Mashukova A."/>
            <person name="Barbour J."/>
            <person name="Wolters D."/>
            <person name="Hatt H."/>
        </authorList>
    </citation>
    <scope>INTERACTION WITH ARRB2</scope>
    <scope>SUBCELLULAR LOCATION</scope>
</reference>
<reference key="11">
    <citation type="journal article" date="2007" name="Nat. Cell Biol.">
        <title>N-terminal alpha-methylation of RCC1 is necessary for stable chromatin association and normal mitosis.</title>
        <authorList>
            <person name="Chen T."/>
            <person name="Muratore T.L."/>
            <person name="Schaner-Tooley C.E."/>
            <person name="Shabanowitz J."/>
            <person name="Hunt D.F."/>
            <person name="Macara I.G."/>
        </authorList>
    </citation>
    <scope>CLEAVAGE OF INITIATOR METHIONINE</scope>
    <scope>SUBCELLULAR LOCATION</scope>
    <scope>FUNCTION</scope>
    <scope>HISTONE-BINDING</scope>
    <scope>INTERACTION WITH RAN</scope>
    <scope>PHOSPHORYLATION AT SER-2</scope>
    <scope>METHYLATION AT SER-2</scope>
    <scope>MUTAGENESIS OF SER-2; PRO-3; LYS-4 AND ASP-182</scope>
</reference>
<reference key="12">
    <citation type="journal article" date="2008" name="J. Cell Biol.">
        <title>Regulation of chromatin binding by a conformational switch in the tail of the Ran exchange factor RCC1.</title>
        <authorList>
            <person name="Hao Y."/>
            <person name="Macara I.G."/>
        </authorList>
    </citation>
    <scope>METHYLATION AT SER-2</scope>
    <scope>FUNCTION</scope>
    <scope>INTERACTION WITH RAN</scope>
    <scope>SUBCELLULAR LOCATION</scope>
</reference>
<reference key="13">
    <citation type="journal article" date="2008" name="Proc. Natl. Acad. Sci. U.S.A.">
        <title>A quantitative atlas of mitotic phosphorylation.</title>
        <authorList>
            <person name="Dephoure N."/>
            <person name="Zhou C."/>
            <person name="Villen J."/>
            <person name="Beausoleil S.A."/>
            <person name="Bakalarski C.E."/>
            <person name="Elledge S.J."/>
            <person name="Gygi S.P."/>
        </authorList>
    </citation>
    <scope>IDENTIFICATION BY MASS SPECTROMETRY [LARGE SCALE ANALYSIS]</scope>
    <source>
        <tissue>Cervix carcinoma</tissue>
    </source>
</reference>
<reference key="14">
    <citation type="journal article" date="2010" name="Nature">
        <title>NRMT is an alpha-N-methyltransferase that methylates RCC1 and retinoblastoma protein.</title>
        <authorList>
            <person name="Tooley C.E."/>
            <person name="Petkowski J.J."/>
            <person name="Muratore-Schroeder T.L."/>
            <person name="Balsbaugh J.L."/>
            <person name="Shabanowitz J."/>
            <person name="Sabat M."/>
            <person name="Minor W."/>
            <person name="Hunt D.F."/>
            <person name="Macara I.G."/>
        </authorList>
    </citation>
    <scope>CLEAVAGE OF INITIATOR METHIONINE</scope>
    <scope>METHYLATION AT SER-2</scope>
    <scope>MUTAGENESIS OF LYS-4</scope>
    <scope>FUNCTION</scope>
    <scope>SUBCELLULAR LOCATION</scope>
</reference>
<reference key="15">
    <citation type="journal article" date="2010" name="Sci. Signal.">
        <title>Quantitative phosphoproteomics reveals widespread full phosphorylation site occupancy during mitosis.</title>
        <authorList>
            <person name="Olsen J.V."/>
            <person name="Vermeulen M."/>
            <person name="Santamaria A."/>
            <person name="Kumar C."/>
            <person name="Miller M.L."/>
            <person name="Jensen L.J."/>
            <person name="Gnad F."/>
            <person name="Cox J."/>
            <person name="Jensen T.S."/>
            <person name="Nigg E.A."/>
            <person name="Brunak S."/>
            <person name="Mann M."/>
        </authorList>
    </citation>
    <scope>PHOSPHORYLATION [LARGE SCALE ANALYSIS] AT SER-11</scope>
    <scope>IDENTIFICATION BY MASS SPECTROMETRY [LARGE SCALE ANALYSIS]</scope>
    <source>
        <tissue>Cervix carcinoma</tissue>
    </source>
</reference>
<reference key="16">
    <citation type="journal article" date="2011" name="BMC Syst. Biol.">
        <title>Initial characterization of the human central proteome.</title>
        <authorList>
            <person name="Burkard T.R."/>
            <person name="Planyavsky M."/>
            <person name="Kaupe I."/>
            <person name="Breitwieser F.P."/>
            <person name="Buerckstuemmer T."/>
            <person name="Bennett K.L."/>
            <person name="Superti-Furga G."/>
            <person name="Colinge J."/>
        </authorList>
    </citation>
    <scope>IDENTIFICATION BY MASS SPECTROMETRY [LARGE SCALE ANALYSIS]</scope>
</reference>
<reference key="17">
    <citation type="journal article" date="2011" name="PLoS Biol.">
        <title>Mitotic spindle assembly around RCC1-coated beads in Xenopus egg extracts.</title>
        <authorList>
            <person name="Halpin D."/>
            <person name="Kalab P."/>
            <person name="Wang J."/>
            <person name="Weis K."/>
            <person name="Heald R."/>
        </authorList>
    </citation>
    <scope>FUNCTION</scope>
</reference>
<reference key="18">
    <citation type="journal article" date="2011" name="Sci. Signal.">
        <title>System-wide temporal characterization of the proteome and phosphoproteome of human embryonic stem cell differentiation.</title>
        <authorList>
            <person name="Rigbolt K.T."/>
            <person name="Prokhorova T.A."/>
            <person name="Akimov V."/>
            <person name="Henningsen J."/>
            <person name="Johansen P.T."/>
            <person name="Kratchmarova I."/>
            <person name="Kassem M."/>
            <person name="Mann M."/>
            <person name="Olsen J.V."/>
            <person name="Blagoev B."/>
        </authorList>
    </citation>
    <scope>PHOSPHORYLATION [LARGE SCALE ANALYSIS] AT SER-11</scope>
    <scope>IDENTIFICATION BY MASS SPECTROMETRY [LARGE SCALE ANALYSIS]</scope>
</reference>
<reference key="19">
    <citation type="journal article" date="2013" name="J. Proteome Res.">
        <title>Toward a comprehensive characterization of a human cancer cell phosphoproteome.</title>
        <authorList>
            <person name="Zhou H."/>
            <person name="Di Palma S."/>
            <person name="Preisinger C."/>
            <person name="Peng M."/>
            <person name="Polat A.N."/>
            <person name="Heck A.J."/>
            <person name="Mohammed S."/>
        </authorList>
    </citation>
    <scope>PHOSPHORYLATION [LARGE SCALE ANALYSIS] AT SER-11</scope>
    <scope>IDENTIFICATION BY MASS SPECTROMETRY [LARGE SCALE ANALYSIS]</scope>
    <source>
        <tissue>Cervix carcinoma</tissue>
        <tissue>Erythroleukemia</tissue>
    </source>
</reference>
<reference key="20">
    <citation type="journal article" date="2014" name="J. Proteomics">
        <title>An enzyme assisted RP-RPLC approach for in-depth analysis of human liver phosphoproteome.</title>
        <authorList>
            <person name="Bian Y."/>
            <person name="Song C."/>
            <person name="Cheng K."/>
            <person name="Dong M."/>
            <person name="Wang F."/>
            <person name="Huang J."/>
            <person name="Sun D."/>
            <person name="Wang L."/>
            <person name="Ye M."/>
            <person name="Zou H."/>
        </authorList>
    </citation>
    <scope>PHOSPHORYLATION [LARGE SCALE ANALYSIS] AT SER-11</scope>
    <scope>IDENTIFICATION BY MASS SPECTROMETRY [LARGE SCALE ANALYSIS]</scope>
    <source>
        <tissue>Liver</tissue>
    </source>
</reference>
<reference key="21">
    <citation type="journal article" date="2018" name="J. Mol. Cell Biol.">
        <title>Mitosis-specific acetylation tunes Ran effector binding for chromosome segregation.</title>
        <authorList>
            <person name="Bao X."/>
            <person name="Liu H."/>
            <person name="Liu X."/>
            <person name="Ruan K."/>
            <person name="Zhang Y."/>
            <person name="Zhang Z."/>
            <person name="Hu Q."/>
            <person name="Liu Y."/>
            <person name="Akram S."/>
            <person name="Zhang J."/>
            <person name="Gong Q."/>
            <person name="Wang W."/>
            <person name="Yuan X."/>
            <person name="Li J."/>
            <person name="Zhao L."/>
            <person name="Dou Z."/>
            <person name="Tian R."/>
            <person name="Yao X."/>
            <person name="Wu J."/>
            <person name="Shi Y."/>
        </authorList>
    </citation>
    <scope>INTERACTION WITH RAN</scope>
</reference>
<reference key="22">
    <citation type="journal article" date="2021" name="Ann. Neurol.">
        <title>Dominant KPNA3 Mutations Cause Infantile-Onset Hereditary Spastic Paraplegia.</title>
        <authorList>
            <person name="Schob C."/>
            <person name="Hempel M."/>
            <person name="Safka Brozkova D."/>
            <person name="Jiang H."/>
            <person name="Kim S.Y."/>
            <person name="Batzir N.A."/>
            <person name="Orenstein N."/>
            <person name="Bierhals T."/>
            <person name="Johannsen J."/>
            <person name="Uhrova Meszarosova A."/>
            <person name="Chae J.H."/>
            <person name="Seeman P."/>
            <person name="Woidy M."/>
            <person name="Fang F."/>
            <person name="Kubisch C."/>
            <person name="Kindler S."/>
            <person name="Denecke J."/>
        </authorList>
    </citation>
    <scope>INTERACTION WITH KPNA3</scope>
</reference>
<reference key="23">
    <citation type="journal article" date="1998" name="Nature">
        <title>The 1.7-A crystal structure of the regulator of chromosome condensation (RCC1) reveals a seven-bladed propeller.</title>
        <authorList>
            <person name="Renault L."/>
            <person name="Nassar N."/>
            <person name="Vetter I."/>
            <person name="Becker J."/>
            <person name="Klebe C."/>
            <person name="Roth M."/>
            <person name="Wittinghofer A."/>
        </authorList>
    </citation>
    <scope>X-RAY CRYSTALLOGRAPHY (1.7 ANGSTROMS) OF 21-421</scope>
</reference>
<reference key="24">
    <citation type="journal article" date="2001" name="Cell">
        <title>Structural basis for guanine nucleotide exchange on Ran by the regulator of chromosome condensation (RCC1).</title>
        <authorList>
            <person name="Renault L."/>
            <person name="Kuhlmann J."/>
            <person name="Henkel A."/>
            <person name="Wittinghofer A."/>
        </authorList>
    </citation>
    <scope>X-RAY CRYSTALLOGRAPHY (1.76 ANGSTROMS) OF 20-421 IN COMPLEX WITH RAN</scope>
    <scope>FUNCTION</scope>
</reference>
<reference evidence="18" key="25">
    <citation type="journal article" date="2017" name="Nat. Commun.">
        <title>Three-dimensional context rather than NLS amino acid sequence determines importin alpha subtype specificity for RCC1.</title>
        <authorList>
            <person name="Sankhala R.S."/>
            <person name="Lokareddy R.K."/>
            <person name="Begum S."/>
            <person name="Pumroy R.A."/>
            <person name="Gillilan R.E."/>
            <person name="Cingolani G."/>
        </authorList>
    </citation>
    <scope>X-RAY CRYSTALLOGRAPHY (3.45 ANGSTROMS) IN COMPLEX WITH KPNA4</scope>
    <scope>FUNCTION</scope>
    <scope>MUTAGENESIS OF ARG-9; SER-11 AND LYS-21</scope>
</reference>
<evidence type="ECO:0000256" key="1">
    <source>
        <dbReference type="SAM" id="MobiDB-lite"/>
    </source>
</evidence>
<evidence type="ECO:0000269" key="2">
    <source>
    </source>
</evidence>
<evidence type="ECO:0000269" key="3">
    <source>
    </source>
</evidence>
<evidence type="ECO:0000269" key="4">
    <source>
    </source>
</evidence>
<evidence type="ECO:0000269" key="5">
    <source>
    </source>
</evidence>
<evidence type="ECO:0000269" key="6">
    <source>
    </source>
</evidence>
<evidence type="ECO:0000269" key="7">
    <source>
    </source>
</evidence>
<evidence type="ECO:0000269" key="8">
    <source>
    </source>
</evidence>
<evidence type="ECO:0000269" key="9">
    <source>
    </source>
</evidence>
<evidence type="ECO:0000269" key="10">
    <source>
    </source>
</evidence>
<evidence type="ECO:0000269" key="11">
    <source>
    </source>
</evidence>
<evidence type="ECO:0000269" key="12">
    <source>
    </source>
</evidence>
<evidence type="ECO:0000269" key="13">
    <source>
    </source>
</evidence>
<evidence type="ECO:0000269" key="14">
    <source>
    </source>
</evidence>
<evidence type="ECO:0000303" key="15">
    <source>
    </source>
</evidence>
<evidence type="ECO:0000303" key="16">
    <source>
    </source>
</evidence>
<evidence type="ECO:0000305" key="17">
    <source>
    </source>
</evidence>
<evidence type="ECO:0007744" key="18">
    <source>
        <dbReference type="PDB" id="5TBK"/>
    </source>
</evidence>
<evidence type="ECO:0007744" key="19">
    <source>
    </source>
</evidence>
<evidence type="ECO:0007744" key="20">
    <source>
    </source>
</evidence>
<evidence type="ECO:0007744" key="21">
    <source>
    </source>
</evidence>
<evidence type="ECO:0007744" key="22">
    <source>
    </source>
</evidence>
<evidence type="ECO:0007744" key="23">
    <source>
    </source>
</evidence>
<evidence type="ECO:0007829" key="24">
    <source>
        <dbReference type="PDB" id="1A12"/>
    </source>
</evidence>
<evidence type="ECO:0007829" key="25">
    <source>
        <dbReference type="PDB" id="1I2M"/>
    </source>
</evidence>
<evidence type="ECO:0007829" key="26">
    <source>
        <dbReference type="PDB" id="5TBK"/>
    </source>
</evidence>
<evidence type="ECO:0007829" key="27">
    <source>
        <dbReference type="PDB" id="8UX1"/>
    </source>
</evidence>
<keyword id="KW-0002">3D-structure</keyword>
<keyword id="KW-0025">Alternative splicing</keyword>
<keyword id="KW-0131">Cell cycle</keyword>
<keyword id="KW-0132">Cell division</keyword>
<keyword id="KW-0158">Chromosome</keyword>
<keyword id="KW-0963">Cytoplasm</keyword>
<keyword id="KW-0903">Direct protein sequencing</keyword>
<keyword id="KW-0238">DNA-binding</keyword>
<keyword id="KW-0344">Guanine-nucleotide releasing factor</keyword>
<keyword id="KW-0488">Methylation</keyword>
<keyword id="KW-0498">Mitosis</keyword>
<keyword id="KW-0539">Nucleus</keyword>
<keyword id="KW-0597">Phosphoprotein</keyword>
<keyword id="KW-1267">Proteomics identification</keyword>
<keyword id="KW-1185">Reference proteome</keyword>
<keyword id="KW-0677">Repeat</keyword>
<protein>
    <recommendedName>
        <fullName>Regulator of chromosome condensation</fullName>
    </recommendedName>
    <alternativeName>
        <fullName>Cell cycle regulatory protein</fullName>
    </alternativeName>
    <alternativeName>
        <fullName>Chromosome condensation protein 1</fullName>
    </alternativeName>
</protein>
<accession>P18754</accession>
<accession>Q16269</accession>
<accession>Q6NT97</accession>
<comment type="function">
    <text evidence="2 3 5 6 7 8 9 12 14">Guanine-nucleotide releasing factor that promotes the exchange of Ran-bound GDP by GTP, and thereby plays an important role in RAN-mediated functions in nuclear import and mitosis (PubMed:11336674, PubMed:17435751, PubMed:1944575, PubMed:20668449, PubMed:22215983, PubMed:29042532). Contributes to the generation of high levels of chromosome-associated, GTP-bound RAN, which is important for mitotic spindle assembly and normal progress through mitosis (PubMed:12194828, PubMed:17435751, PubMed:22215983). Via its role in maintaining high levels of GTP-bound RAN in the nucleus, contributes to the release of cargo proteins from importins after nuclear import (PubMed:22215983). Involved in the regulation of onset of chromosome condensation in the S phase (PubMed:3678831). Binds both to the nucleosomes and double-stranded DNA (PubMed:17435751, PubMed:18762580).</text>
</comment>
<comment type="subunit">
    <text evidence="2 4 5 6 11 12 13">Interacts with RAN (PubMed:11336674, PubMed:17435751, PubMed:18762580, PubMed:29040603). Interacts with KPNA3 (PubMed:34564892). Interacts (via N-terminus and RCC1 repeats) with KPNA4 (PubMed:29042532). Interacts with ARRB2; the interaction is detected in the nucleus upon OR1D2 stimulation (PubMed:16820410).</text>
</comment>
<comment type="interaction">
    <interactant intactId="EBI-992720">
        <id>P18754</id>
    </interactant>
    <interactant intactId="EBI-373016">
        <id>Q9BV86</id>
        <label>NTMT1</label>
    </interactant>
    <organismsDiffer>false</organismsDiffer>
    <experiments>4</experiments>
</comment>
<comment type="interaction">
    <interactant intactId="EBI-992720">
        <id>P18754</id>
    </interactant>
    <interactant intactId="EBI-286642">
        <id>P62826</id>
        <label>RAN</label>
    </interactant>
    <organismsDiffer>false</organismsDiffer>
    <experiments>19</experiments>
</comment>
<comment type="interaction">
    <interactant intactId="EBI-992720">
        <id>P18754</id>
    </interactant>
    <interactant intactId="EBI-992681">
        <id>Q9H6Z4</id>
        <label>RANBP3</label>
    </interactant>
    <organismsDiffer>false</organismsDiffer>
    <experiments>2</experiments>
</comment>
<comment type="interaction">
    <interactant intactId="EBI-992720">
        <id>P18754</id>
    </interactant>
    <interactant intactId="EBI-355867">
        <id>O14980</id>
        <label>XPO1</label>
    </interactant>
    <organismsDiffer>false</organismsDiffer>
    <experiments>2</experiments>
</comment>
<comment type="interaction">
    <interactant intactId="EBI-992720">
        <id>P18754</id>
    </interactant>
    <interactant intactId="EBI-1251201">
        <id>P02281</id>
    </interactant>
    <organismsDiffer>true</organismsDiffer>
    <experiments>2</experiments>
</comment>
<comment type="subcellular location">
    <subcellularLocation>
        <location evidence="3 4 5 10">Nucleus</location>
    </subcellularLocation>
    <subcellularLocation>
        <location evidence="3 5 6 8">Chromosome</location>
    </subcellularLocation>
    <subcellularLocation>
        <location evidence="3 5 8">Cytoplasm</location>
    </subcellularLocation>
    <text evidence="3 5 8">Predominantly nuclear in interphase cells (PubMed:12194828). Binds to mitotic chromosomes (PubMed:12194828, PubMed:17435751, PubMed:20668449).</text>
</comment>
<comment type="alternative products">
    <event type="alternative splicing"/>
    <isoform>
        <id>P18754-1</id>
        <name>1</name>
        <sequence type="displayed"/>
    </isoform>
    <isoform>
        <id>P18754-2</id>
        <name>2</name>
        <name>RCC1-I</name>
        <sequence type="described" ref="VSP_041122"/>
    </isoform>
</comment>
<comment type="PTM">
    <text evidence="5 6 8">N-terminal methylation by METTL11A/NTM1 is required for binding double-stranded DNA and stable chromatin association. Di- and trimethylation produce a permanent positive charge on the amino group, which facilitates electrostatic binding to the phosphate groups on DNA, while inhibiting histone-binding. Methylated tail helps retain RCC1 on chromosomes during nucleotide exchange on Ran.</text>
</comment>
<comment type="miscellaneous">
    <text>Patients with Raynaud disease produce antibodies that bind to RCC1.</text>
</comment>
<gene>
    <name type="primary">RCC1</name>
    <name type="synonym">CHC1</name>
</gene>
<organism>
    <name type="scientific">Homo sapiens</name>
    <name type="common">Human</name>
    <dbReference type="NCBI Taxonomy" id="9606"/>
    <lineage>
        <taxon>Eukaryota</taxon>
        <taxon>Metazoa</taxon>
        <taxon>Chordata</taxon>
        <taxon>Craniata</taxon>
        <taxon>Vertebrata</taxon>
        <taxon>Euteleostomi</taxon>
        <taxon>Mammalia</taxon>
        <taxon>Eutheria</taxon>
        <taxon>Euarchontoglires</taxon>
        <taxon>Primates</taxon>
        <taxon>Haplorrhini</taxon>
        <taxon>Catarrhini</taxon>
        <taxon>Hominidae</taxon>
        <taxon>Homo</taxon>
    </lineage>
</organism>
<feature type="initiator methionine" description="Removed" evidence="5 8">
    <location>
        <position position="1"/>
    </location>
</feature>
<feature type="chain" id="PRO_0000206628" description="Regulator of chromosome condensation">
    <location>
        <begin position="2"/>
        <end position="421"/>
    </location>
</feature>
<feature type="repeat" description="RCC1 1">
    <location>
        <begin position="34"/>
        <end position="84"/>
    </location>
</feature>
<feature type="repeat" description="RCC1 2">
    <location>
        <begin position="85"/>
        <end position="136"/>
    </location>
</feature>
<feature type="repeat" description="RCC1 3">
    <location>
        <begin position="138"/>
        <end position="189"/>
    </location>
</feature>
<feature type="repeat" description="RCC1 4">
    <location>
        <begin position="191"/>
        <end position="257"/>
    </location>
</feature>
<feature type="repeat" description="RCC1 5">
    <location>
        <begin position="258"/>
        <end position="311"/>
    </location>
</feature>
<feature type="repeat" description="RCC1 6">
    <location>
        <begin position="312"/>
        <end position="362"/>
    </location>
</feature>
<feature type="repeat" description="RCC1 7">
    <location>
        <begin position="363"/>
        <end position="416"/>
    </location>
</feature>
<feature type="region of interest" description="Disordered" evidence="1">
    <location>
        <begin position="1"/>
        <end position="36"/>
    </location>
</feature>
<feature type="short sequence motif" description="Bipartite nuclear localization signal" evidence="17">
    <location>
        <begin position="4"/>
        <end position="24"/>
    </location>
</feature>
<feature type="compositionally biased region" description="Basic residues" evidence="1">
    <location>
        <begin position="1"/>
        <end position="11"/>
    </location>
</feature>
<feature type="compositionally biased region" description="Basic residues" evidence="1">
    <location>
        <begin position="19"/>
        <end position="29"/>
    </location>
</feature>
<feature type="modified residue" description="N,N,N-trimethylserine; alternate" evidence="5 6 8">
    <location>
        <position position="2"/>
    </location>
</feature>
<feature type="modified residue" description="N,N-dimethylserine; alternate" evidence="5 6 8">
    <location>
        <position position="2"/>
    </location>
</feature>
<feature type="modified residue" description="N-methylserine; alternate" evidence="5 6 8">
    <location>
        <position position="2"/>
    </location>
</feature>
<feature type="modified residue" description="Phosphoserine" evidence="5">
    <location>
        <position position="2"/>
    </location>
</feature>
<feature type="modified residue" description="Phosphoserine" evidence="19 20 21 22 23">
    <location>
        <position position="11"/>
    </location>
</feature>
<feature type="splice variant" id="VSP_041122" description="In isoform 2." evidence="15 16">
    <original>K</original>
    <variation>KDTRAAASRRVPGARSCQGACGPSPPDQKTRP</variation>
    <location>
        <position position="24"/>
    </location>
</feature>
<feature type="mutagenesis site" description="Does not abolish N-terminal methylation." evidence="5">
    <original>S</original>
    <variation>A</variation>
    <location>
        <position position="2"/>
    </location>
</feature>
<feature type="mutagenesis site" description="Does not abolish N-terminal methylation." evidence="5">
    <original>S</original>
    <variation>Q</variation>
    <location>
        <position position="2"/>
    </location>
</feature>
<feature type="mutagenesis site" description="Abolishes N-terminal methylation." evidence="5">
    <original>P</original>
    <variation>Q</variation>
    <location>
        <position position="3"/>
    </location>
</feature>
<feature type="mutagenesis site" description="Abolishes N-terminal methylation." evidence="5 8">
    <original>K</original>
    <variation>Q</variation>
    <location>
        <position position="4"/>
    </location>
</feature>
<feature type="mutagenesis site" description="Strongly impairs N-terminal methylation and subcellular localization." evidence="5 8">
    <original>K</original>
    <variation>R</variation>
    <location>
        <position position="4"/>
    </location>
</feature>
<feature type="mutagenesis site" description="Decreases KPNA4 binding. Strongly decreases KPNA4 binding; when associated with A-21." evidence="12">
    <original>R</original>
    <variation>A</variation>
    <location>
        <position position="9"/>
    </location>
</feature>
<feature type="mutagenesis site" description="Phosphomimetic mutant. Decreases KPNA4 binding by about 10%." evidence="12">
    <original>S</original>
    <variation>E</variation>
    <location>
        <position position="11"/>
    </location>
</feature>
<feature type="mutagenesis site" description="Decreases KPNA4 binding. Strongly decreases KPNA4 binding; when associated with A-9." evidence="12">
    <original>K</original>
    <variation>A</variation>
    <location>
        <position position="21"/>
    </location>
</feature>
<feature type="mutagenesis site" description="Abolishes interaction with Ran and impairs chromosome localization." evidence="3 5">
    <original>D</original>
    <variation>A</variation>
    <location>
        <position position="182"/>
    </location>
</feature>
<feature type="strand" evidence="24">
    <location>
        <begin position="35"/>
        <end position="42"/>
    </location>
</feature>
<feature type="strand" evidence="27">
    <location>
        <begin position="48"/>
        <end position="50"/>
    </location>
</feature>
<feature type="strand" evidence="24">
    <location>
        <begin position="56"/>
        <end position="63"/>
    </location>
</feature>
<feature type="strand" evidence="24">
    <location>
        <begin position="69"/>
        <end position="74"/>
    </location>
</feature>
<feature type="strand" evidence="24">
    <location>
        <begin position="76"/>
        <end position="83"/>
    </location>
</feature>
<feature type="strand" evidence="24">
    <location>
        <begin position="88"/>
        <end position="92"/>
    </location>
</feature>
<feature type="strand" evidence="27">
    <location>
        <begin position="95"/>
        <end position="97"/>
    </location>
</feature>
<feature type="helix" evidence="24">
    <location>
        <begin position="108"/>
        <end position="110"/>
    </location>
</feature>
<feature type="strand" evidence="24">
    <location>
        <begin position="121"/>
        <end position="126"/>
    </location>
</feature>
<feature type="strand" evidence="24">
    <location>
        <begin position="128"/>
        <end position="135"/>
    </location>
</feature>
<feature type="strand" evidence="24">
    <location>
        <begin position="140"/>
        <end position="144"/>
    </location>
</feature>
<feature type="strand" evidence="24">
    <location>
        <begin position="146"/>
        <end position="148"/>
    </location>
</feature>
<feature type="strand" evidence="24">
    <location>
        <begin position="151"/>
        <end position="158"/>
    </location>
</feature>
<feature type="strand" evidence="24">
    <location>
        <begin position="162"/>
        <end position="168"/>
    </location>
</feature>
<feature type="strand" evidence="24">
    <location>
        <begin position="174"/>
        <end position="179"/>
    </location>
</feature>
<feature type="strand" evidence="24">
    <location>
        <begin position="181"/>
        <end position="188"/>
    </location>
</feature>
<feature type="strand" evidence="24">
    <location>
        <begin position="193"/>
        <end position="197"/>
    </location>
</feature>
<feature type="strand" evidence="25">
    <location>
        <begin position="205"/>
        <end position="207"/>
    </location>
</feature>
<feature type="helix" evidence="24">
    <location>
        <begin position="208"/>
        <end position="210"/>
    </location>
</feature>
<feature type="strand" evidence="24">
    <location>
        <begin position="212"/>
        <end position="214"/>
    </location>
</feature>
<feature type="helix" evidence="24">
    <location>
        <begin position="216"/>
        <end position="219"/>
    </location>
</feature>
<feature type="helix" evidence="24">
    <location>
        <begin position="220"/>
        <end position="224"/>
    </location>
</feature>
<feature type="turn" evidence="27">
    <location>
        <begin position="232"/>
        <end position="234"/>
    </location>
</feature>
<feature type="strand" evidence="24">
    <location>
        <begin position="242"/>
        <end position="248"/>
    </location>
</feature>
<feature type="strand" evidence="24">
    <location>
        <begin position="251"/>
        <end position="256"/>
    </location>
</feature>
<feature type="strand" evidence="24">
    <location>
        <begin position="261"/>
        <end position="265"/>
    </location>
</feature>
<feature type="strand" evidence="24">
    <location>
        <begin position="280"/>
        <end position="285"/>
    </location>
</feature>
<feature type="helix" evidence="24">
    <location>
        <begin position="287"/>
        <end position="289"/>
    </location>
</feature>
<feature type="strand" evidence="27">
    <location>
        <begin position="292"/>
        <end position="294"/>
    </location>
</feature>
<feature type="strand" evidence="24">
    <location>
        <begin position="296"/>
        <end position="301"/>
    </location>
</feature>
<feature type="strand" evidence="24">
    <location>
        <begin position="303"/>
        <end position="310"/>
    </location>
</feature>
<feature type="strand" evidence="24">
    <location>
        <begin position="315"/>
        <end position="319"/>
    </location>
</feature>
<feature type="helix" evidence="24">
    <location>
        <begin position="322"/>
        <end position="324"/>
    </location>
</feature>
<feature type="strand" evidence="26">
    <location>
        <begin position="328"/>
        <end position="331"/>
    </location>
</feature>
<feature type="strand" evidence="24">
    <location>
        <begin position="335"/>
        <end position="340"/>
    </location>
</feature>
<feature type="strand" evidence="24">
    <location>
        <begin position="343"/>
        <end position="352"/>
    </location>
</feature>
<feature type="strand" evidence="24">
    <location>
        <begin position="354"/>
        <end position="361"/>
    </location>
</feature>
<feature type="strand" evidence="24">
    <location>
        <begin position="366"/>
        <end position="370"/>
    </location>
</feature>
<feature type="strand" evidence="24">
    <location>
        <begin position="379"/>
        <end position="381"/>
    </location>
</feature>
<feature type="strand" evidence="24">
    <location>
        <begin position="385"/>
        <end position="390"/>
    </location>
</feature>
<feature type="turn" evidence="24">
    <location>
        <begin position="394"/>
        <end position="398"/>
    </location>
</feature>
<feature type="strand" evidence="24">
    <location>
        <begin position="399"/>
        <end position="406"/>
    </location>
</feature>
<feature type="strand" evidence="24">
    <location>
        <begin position="408"/>
        <end position="417"/>
    </location>
</feature>
<sequence length="421" mass="44969">MSPKRIAKRRSPPADAIPKSKKVKVSHRSHSTEPGLVLTLGQGDVGQLGLGENVMERKKPALVSIPEDVVQAEAGGMHTVCLSKSGQVYSFGCNDEGALGRDTSVEGSEMVPGKVELQEKVVQVSAGDSHTAALTDDGRVFLWGSFRDNNGVIGLLEPMKKSMVPVQVQLDVPVVKVASGNDHLVMLTADGDLYTLGCGEQGQLGRVPELFANRGGRQGLERLLVPKCVMLKSRGSRGHVRFQDAFCGAYFTFAISHEGHVYGFGLSNYHQLGTPGTESCFIPQNLTSFKNSTKSWVGFSGGQHHTVCMDSEGKAYSLGRAEYGRLGLGEGAEEKSIPTLISRLPAVSSVACGASVGYAVTKDGRVFAWGMGTNYQLGTGQDEDAWSPVEMMGKQLENRVVLSVSSGGQHTVLLVKDKEQS</sequence>
<proteinExistence type="evidence at protein level"/>